<comment type="function">
    <text evidence="1">An essential GTPase that binds both GDP and GTP, with rapid nucleotide exchange. Plays a role in 16S rRNA processing and 30S ribosomal subunit biogenesis and possibly also in cell cycle regulation and energy metabolism.</text>
</comment>
<comment type="subunit">
    <text evidence="1">Monomer.</text>
</comment>
<comment type="subcellular location">
    <subcellularLocation>
        <location>Cytoplasm</location>
    </subcellularLocation>
    <subcellularLocation>
        <location evidence="1">Cell inner membrane</location>
        <topology evidence="1">Peripheral membrane protein</topology>
    </subcellularLocation>
</comment>
<comment type="similarity">
    <text evidence="1 2">Belongs to the TRAFAC class TrmE-Era-EngA-EngB-Septin-like GTPase superfamily. Era GTPase family.</text>
</comment>
<protein>
    <recommendedName>
        <fullName evidence="1">GTPase Era</fullName>
    </recommendedName>
</protein>
<proteinExistence type="inferred from homology"/>
<accession>B1WT49</accession>
<evidence type="ECO:0000255" key="1">
    <source>
        <dbReference type="HAMAP-Rule" id="MF_00367"/>
    </source>
</evidence>
<evidence type="ECO:0000255" key="2">
    <source>
        <dbReference type="PROSITE-ProRule" id="PRU01050"/>
    </source>
</evidence>
<name>ERA_CROS5</name>
<sequence>MNENLDLGNLSTIPIAPEGFKSGFVGIIGRPNVGKSTLMNQLIGQKIAITSPVSQTTRNRLQGILTTDKAQIIFVDTPGIHKPHHTLGKIIVKNAKTAINSVDIILLVVDSSVKSGGGDRYIIDLLKTVNQPVILGLNKSDQQTEKYQEIDESYANLIQDHNWPMIKFSALTGDGVETLQNTLIEQLEPGPYYYPPDLITDQPERFIMAELIREQILQLTRQEVPHSVAVTIEKVEESPKITKIFAAINVERSSQKGIIIGQKGNMLKAIGTTAREQIQKLIAGEVFLKLFVKVEPQWRQSNLRLAEFGYRVEE</sequence>
<organism>
    <name type="scientific">Crocosphaera subtropica (strain ATCC 51142 / BH68)</name>
    <name type="common">Cyanothece sp. (strain ATCC 51142)</name>
    <dbReference type="NCBI Taxonomy" id="43989"/>
    <lineage>
        <taxon>Bacteria</taxon>
        <taxon>Bacillati</taxon>
        <taxon>Cyanobacteriota</taxon>
        <taxon>Cyanophyceae</taxon>
        <taxon>Oscillatoriophycideae</taxon>
        <taxon>Chroococcales</taxon>
        <taxon>Aphanothecaceae</taxon>
        <taxon>Crocosphaera</taxon>
        <taxon>Crocosphaera subtropica</taxon>
    </lineage>
</organism>
<reference key="1">
    <citation type="journal article" date="2008" name="Proc. Natl. Acad. Sci. U.S.A.">
        <title>The genome of Cyanothece 51142, a unicellular diazotrophic cyanobacterium important in the marine nitrogen cycle.</title>
        <authorList>
            <person name="Welsh E.A."/>
            <person name="Liberton M."/>
            <person name="Stoeckel J."/>
            <person name="Loh T."/>
            <person name="Elvitigala T."/>
            <person name="Wang C."/>
            <person name="Wollam A."/>
            <person name="Fulton R.S."/>
            <person name="Clifton S.W."/>
            <person name="Jacobs J.M."/>
            <person name="Aurora R."/>
            <person name="Ghosh B.K."/>
            <person name="Sherman L.A."/>
            <person name="Smith R.D."/>
            <person name="Wilson R.K."/>
            <person name="Pakrasi H.B."/>
        </authorList>
    </citation>
    <scope>NUCLEOTIDE SEQUENCE [LARGE SCALE GENOMIC DNA]</scope>
    <source>
        <strain>ATCC 51142 / BH68</strain>
    </source>
</reference>
<dbReference type="EMBL" id="CP000806">
    <property type="protein sequence ID" value="ACB51971.1"/>
    <property type="molecule type" value="Genomic_DNA"/>
</dbReference>
<dbReference type="RefSeq" id="WP_009544687.1">
    <property type="nucleotide sequence ID" value="NC_010546.1"/>
</dbReference>
<dbReference type="SMR" id="B1WT49"/>
<dbReference type="STRING" id="43989.cce_2623"/>
<dbReference type="KEGG" id="cyt:cce_2623"/>
<dbReference type="eggNOG" id="COG1159">
    <property type="taxonomic scope" value="Bacteria"/>
</dbReference>
<dbReference type="HOGENOM" id="CLU_038009_1_0_3"/>
<dbReference type="OrthoDB" id="9805918at2"/>
<dbReference type="Proteomes" id="UP000001203">
    <property type="component" value="Chromosome circular"/>
</dbReference>
<dbReference type="GO" id="GO:0005829">
    <property type="term" value="C:cytosol"/>
    <property type="evidence" value="ECO:0007669"/>
    <property type="project" value="TreeGrafter"/>
</dbReference>
<dbReference type="GO" id="GO:0005886">
    <property type="term" value="C:plasma membrane"/>
    <property type="evidence" value="ECO:0007669"/>
    <property type="project" value="UniProtKB-SubCell"/>
</dbReference>
<dbReference type="GO" id="GO:0005525">
    <property type="term" value="F:GTP binding"/>
    <property type="evidence" value="ECO:0007669"/>
    <property type="project" value="UniProtKB-UniRule"/>
</dbReference>
<dbReference type="GO" id="GO:0003924">
    <property type="term" value="F:GTPase activity"/>
    <property type="evidence" value="ECO:0007669"/>
    <property type="project" value="UniProtKB-UniRule"/>
</dbReference>
<dbReference type="GO" id="GO:0043024">
    <property type="term" value="F:ribosomal small subunit binding"/>
    <property type="evidence" value="ECO:0007669"/>
    <property type="project" value="TreeGrafter"/>
</dbReference>
<dbReference type="GO" id="GO:0070181">
    <property type="term" value="F:small ribosomal subunit rRNA binding"/>
    <property type="evidence" value="ECO:0007669"/>
    <property type="project" value="UniProtKB-UniRule"/>
</dbReference>
<dbReference type="GO" id="GO:0000028">
    <property type="term" value="P:ribosomal small subunit assembly"/>
    <property type="evidence" value="ECO:0007669"/>
    <property type="project" value="TreeGrafter"/>
</dbReference>
<dbReference type="CDD" id="cd04163">
    <property type="entry name" value="Era"/>
    <property type="match status" value="1"/>
</dbReference>
<dbReference type="CDD" id="cd22534">
    <property type="entry name" value="KH-II_Era"/>
    <property type="match status" value="1"/>
</dbReference>
<dbReference type="FunFam" id="3.30.300.20:FF:000003">
    <property type="entry name" value="GTPase Era"/>
    <property type="match status" value="1"/>
</dbReference>
<dbReference type="FunFam" id="3.40.50.300:FF:000094">
    <property type="entry name" value="GTPase Era"/>
    <property type="match status" value="1"/>
</dbReference>
<dbReference type="Gene3D" id="3.30.300.20">
    <property type="match status" value="1"/>
</dbReference>
<dbReference type="Gene3D" id="3.40.50.300">
    <property type="entry name" value="P-loop containing nucleotide triphosphate hydrolases"/>
    <property type="match status" value="1"/>
</dbReference>
<dbReference type="HAMAP" id="MF_00367">
    <property type="entry name" value="GTPase_Era"/>
    <property type="match status" value="1"/>
</dbReference>
<dbReference type="InterPro" id="IPR030388">
    <property type="entry name" value="G_ERA_dom"/>
</dbReference>
<dbReference type="InterPro" id="IPR006073">
    <property type="entry name" value="GTP-bd"/>
</dbReference>
<dbReference type="InterPro" id="IPR005662">
    <property type="entry name" value="GTPase_Era-like"/>
</dbReference>
<dbReference type="InterPro" id="IPR015946">
    <property type="entry name" value="KH_dom-like_a/b"/>
</dbReference>
<dbReference type="InterPro" id="IPR004044">
    <property type="entry name" value="KH_dom_type_2"/>
</dbReference>
<dbReference type="InterPro" id="IPR009019">
    <property type="entry name" value="KH_sf_prok-type"/>
</dbReference>
<dbReference type="InterPro" id="IPR027417">
    <property type="entry name" value="P-loop_NTPase"/>
</dbReference>
<dbReference type="InterPro" id="IPR005225">
    <property type="entry name" value="Small_GTP-bd"/>
</dbReference>
<dbReference type="NCBIfam" id="TIGR00436">
    <property type="entry name" value="era"/>
    <property type="match status" value="1"/>
</dbReference>
<dbReference type="NCBIfam" id="NF000908">
    <property type="entry name" value="PRK00089.1"/>
    <property type="match status" value="1"/>
</dbReference>
<dbReference type="NCBIfam" id="TIGR00231">
    <property type="entry name" value="small_GTP"/>
    <property type="match status" value="1"/>
</dbReference>
<dbReference type="PANTHER" id="PTHR42698">
    <property type="entry name" value="GTPASE ERA"/>
    <property type="match status" value="1"/>
</dbReference>
<dbReference type="PANTHER" id="PTHR42698:SF1">
    <property type="entry name" value="GTPASE ERA, MITOCHONDRIAL"/>
    <property type="match status" value="1"/>
</dbReference>
<dbReference type="Pfam" id="PF07650">
    <property type="entry name" value="KH_2"/>
    <property type="match status" value="1"/>
</dbReference>
<dbReference type="Pfam" id="PF01926">
    <property type="entry name" value="MMR_HSR1"/>
    <property type="match status" value="1"/>
</dbReference>
<dbReference type="PRINTS" id="PR00326">
    <property type="entry name" value="GTP1OBG"/>
</dbReference>
<dbReference type="SUPFAM" id="SSF52540">
    <property type="entry name" value="P-loop containing nucleoside triphosphate hydrolases"/>
    <property type="match status" value="1"/>
</dbReference>
<dbReference type="SUPFAM" id="SSF54814">
    <property type="entry name" value="Prokaryotic type KH domain (KH-domain type II)"/>
    <property type="match status" value="1"/>
</dbReference>
<dbReference type="PROSITE" id="PS51713">
    <property type="entry name" value="G_ERA"/>
    <property type="match status" value="1"/>
</dbReference>
<dbReference type="PROSITE" id="PS50823">
    <property type="entry name" value="KH_TYPE_2"/>
    <property type="match status" value="1"/>
</dbReference>
<gene>
    <name evidence="1" type="primary">era</name>
    <name type="ordered locus">cce_2623</name>
</gene>
<feature type="chain" id="PRO_1000133775" description="GTPase Era">
    <location>
        <begin position="1"/>
        <end position="314"/>
    </location>
</feature>
<feature type="domain" description="Era-type G" evidence="2">
    <location>
        <begin position="21"/>
        <end position="189"/>
    </location>
</feature>
<feature type="domain" description="KH type-2" evidence="1">
    <location>
        <begin position="212"/>
        <end position="296"/>
    </location>
</feature>
<feature type="region of interest" description="G1" evidence="2">
    <location>
        <begin position="29"/>
        <end position="36"/>
    </location>
</feature>
<feature type="region of interest" description="G2" evidence="2">
    <location>
        <begin position="55"/>
        <end position="59"/>
    </location>
</feature>
<feature type="region of interest" description="G3" evidence="2">
    <location>
        <begin position="76"/>
        <end position="79"/>
    </location>
</feature>
<feature type="region of interest" description="G4" evidence="2">
    <location>
        <begin position="138"/>
        <end position="141"/>
    </location>
</feature>
<feature type="region of interest" description="G5" evidence="2">
    <location>
        <begin position="168"/>
        <end position="170"/>
    </location>
</feature>
<feature type="binding site" evidence="1">
    <location>
        <begin position="29"/>
        <end position="36"/>
    </location>
    <ligand>
        <name>GTP</name>
        <dbReference type="ChEBI" id="CHEBI:37565"/>
    </ligand>
</feature>
<feature type="binding site" evidence="1">
    <location>
        <begin position="76"/>
        <end position="80"/>
    </location>
    <ligand>
        <name>GTP</name>
        <dbReference type="ChEBI" id="CHEBI:37565"/>
    </ligand>
</feature>
<feature type="binding site" evidence="1">
    <location>
        <begin position="138"/>
        <end position="141"/>
    </location>
    <ligand>
        <name>GTP</name>
        <dbReference type="ChEBI" id="CHEBI:37565"/>
    </ligand>
</feature>
<keyword id="KW-0997">Cell inner membrane</keyword>
<keyword id="KW-1003">Cell membrane</keyword>
<keyword id="KW-0963">Cytoplasm</keyword>
<keyword id="KW-0342">GTP-binding</keyword>
<keyword id="KW-0472">Membrane</keyword>
<keyword id="KW-0547">Nucleotide-binding</keyword>
<keyword id="KW-1185">Reference proteome</keyword>
<keyword id="KW-0690">Ribosome biogenesis</keyword>
<keyword id="KW-0694">RNA-binding</keyword>
<keyword id="KW-0699">rRNA-binding</keyword>